<name>CYSC_VIBPA</name>
<keyword id="KW-0067">ATP-binding</keyword>
<keyword id="KW-0418">Kinase</keyword>
<keyword id="KW-0547">Nucleotide-binding</keyword>
<keyword id="KW-0597">Phosphoprotein</keyword>
<keyword id="KW-0808">Transferase</keyword>
<comment type="function">
    <text>Catalyzes the synthesis of activated sulfate.</text>
</comment>
<comment type="catalytic activity">
    <reaction evidence="1">
        <text>adenosine 5'-phosphosulfate + ATP = 3'-phosphoadenylyl sulfate + ADP + H(+)</text>
        <dbReference type="Rhea" id="RHEA:24152"/>
        <dbReference type="ChEBI" id="CHEBI:15378"/>
        <dbReference type="ChEBI" id="CHEBI:30616"/>
        <dbReference type="ChEBI" id="CHEBI:58243"/>
        <dbReference type="ChEBI" id="CHEBI:58339"/>
        <dbReference type="ChEBI" id="CHEBI:456216"/>
        <dbReference type="EC" id="2.7.1.25"/>
    </reaction>
</comment>
<comment type="pathway">
    <text evidence="1">Sulfur metabolism; hydrogen sulfide biosynthesis; sulfite from sulfate: step 2/3.</text>
</comment>
<comment type="similarity">
    <text evidence="1">Belongs to the APS kinase family.</text>
</comment>
<sequence>MTAETPVKDENIVWHQHTVDKQFRAELKKQKPAVLWFTGLSGAGKSTVAGALENRLAELGYHTYLLDGDNVRHGLCSDLGFSEQDRRENIRRIGELAKLMADAGLIVLSAFISPHRAERQLVRDLLPEGEFIEVFVNASLEVCEGRDPKGLYKKARAGEIPNFTGIDSEYQAPINPEIDLPAGEKSVEELVELCLNELKQRRVIS</sequence>
<evidence type="ECO:0000255" key="1">
    <source>
        <dbReference type="HAMAP-Rule" id="MF_00065"/>
    </source>
</evidence>
<dbReference type="EC" id="2.7.1.25" evidence="1"/>
<dbReference type="EMBL" id="BA000031">
    <property type="protein sequence ID" value="BAC58559.1"/>
    <property type="molecule type" value="Genomic_DNA"/>
</dbReference>
<dbReference type="RefSeq" id="NP_796675.1">
    <property type="nucleotide sequence ID" value="NC_004603.1"/>
</dbReference>
<dbReference type="RefSeq" id="WP_005454655.1">
    <property type="nucleotide sequence ID" value="NC_004603.1"/>
</dbReference>
<dbReference type="SMR" id="Q87SX6"/>
<dbReference type="GeneID" id="1187763"/>
<dbReference type="KEGG" id="vpa:VP0296"/>
<dbReference type="PATRIC" id="fig|223926.6.peg.286"/>
<dbReference type="eggNOG" id="COG0529">
    <property type="taxonomic scope" value="Bacteria"/>
</dbReference>
<dbReference type="HOGENOM" id="CLU_046932_1_0_6"/>
<dbReference type="UniPathway" id="UPA00140">
    <property type="reaction ID" value="UER00205"/>
</dbReference>
<dbReference type="Proteomes" id="UP000002493">
    <property type="component" value="Chromosome 1"/>
</dbReference>
<dbReference type="GO" id="GO:0004020">
    <property type="term" value="F:adenylylsulfate kinase activity"/>
    <property type="evidence" value="ECO:0007669"/>
    <property type="project" value="UniProtKB-UniRule"/>
</dbReference>
<dbReference type="GO" id="GO:0005524">
    <property type="term" value="F:ATP binding"/>
    <property type="evidence" value="ECO:0007669"/>
    <property type="project" value="UniProtKB-UniRule"/>
</dbReference>
<dbReference type="GO" id="GO:0070814">
    <property type="term" value="P:hydrogen sulfide biosynthetic process"/>
    <property type="evidence" value="ECO:0007669"/>
    <property type="project" value="UniProtKB-UniRule"/>
</dbReference>
<dbReference type="GO" id="GO:0000103">
    <property type="term" value="P:sulfate assimilation"/>
    <property type="evidence" value="ECO:0007669"/>
    <property type="project" value="UniProtKB-UniRule"/>
</dbReference>
<dbReference type="CDD" id="cd02027">
    <property type="entry name" value="APSK"/>
    <property type="match status" value="1"/>
</dbReference>
<dbReference type="FunFam" id="3.40.50.300:FF:000212">
    <property type="entry name" value="Adenylyl-sulfate kinase"/>
    <property type="match status" value="1"/>
</dbReference>
<dbReference type="Gene3D" id="3.40.50.300">
    <property type="entry name" value="P-loop containing nucleotide triphosphate hydrolases"/>
    <property type="match status" value="1"/>
</dbReference>
<dbReference type="HAMAP" id="MF_00065">
    <property type="entry name" value="Adenylyl_sulf_kinase"/>
    <property type="match status" value="1"/>
</dbReference>
<dbReference type="InterPro" id="IPR002891">
    <property type="entry name" value="APS_kinase"/>
</dbReference>
<dbReference type="InterPro" id="IPR027417">
    <property type="entry name" value="P-loop_NTPase"/>
</dbReference>
<dbReference type="NCBIfam" id="TIGR00455">
    <property type="entry name" value="apsK"/>
    <property type="match status" value="1"/>
</dbReference>
<dbReference type="NCBIfam" id="NF003013">
    <property type="entry name" value="PRK03846.1"/>
    <property type="match status" value="1"/>
</dbReference>
<dbReference type="PANTHER" id="PTHR11055:SF63">
    <property type="entry name" value="ADENYLYL-SULFATE KINASE 1, CHLOROPLASTIC"/>
    <property type="match status" value="1"/>
</dbReference>
<dbReference type="PANTHER" id="PTHR11055">
    <property type="entry name" value="BIFUNCTIONAL 3'-PHOSPHOADENOSINE 5'-PHOSPHOSULFATE SYNTHASE"/>
    <property type="match status" value="1"/>
</dbReference>
<dbReference type="Pfam" id="PF01583">
    <property type="entry name" value="APS_kinase"/>
    <property type="match status" value="1"/>
</dbReference>
<dbReference type="SUPFAM" id="SSF52540">
    <property type="entry name" value="P-loop containing nucleoside triphosphate hydrolases"/>
    <property type="match status" value="1"/>
</dbReference>
<protein>
    <recommendedName>
        <fullName evidence="1">Adenylyl-sulfate kinase</fullName>
        <ecNumber evidence="1">2.7.1.25</ecNumber>
    </recommendedName>
    <alternativeName>
        <fullName evidence="1">APS kinase</fullName>
    </alternativeName>
    <alternativeName>
        <fullName evidence="1">ATP adenosine-5'-phosphosulfate 3'-phosphotransferase</fullName>
    </alternativeName>
    <alternativeName>
        <fullName evidence="1">Adenosine-5'-phosphosulfate kinase</fullName>
    </alternativeName>
</protein>
<proteinExistence type="inferred from homology"/>
<reference key="1">
    <citation type="journal article" date="2003" name="Lancet">
        <title>Genome sequence of Vibrio parahaemolyticus: a pathogenic mechanism distinct from that of V. cholerae.</title>
        <authorList>
            <person name="Makino K."/>
            <person name="Oshima K."/>
            <person name="Kurokawa K."/>
            <person name="Yokoyama K."/>
            <person name="Uda T."/>
            <person name="Tagomori K."/>
            <person name="Iijima Y."/>
            <person name="Najima M."/>
            <person name="Nakano M."/>
            <person name="Yamashita A."/>
            <person name="Kubota Y."/>
            <person name="Kimura S."/>
            <person name="Yasunaga T."/>
            <person name="Honda T."/>
            <person name="Shinagawa H."/>
            <person name="Hattori M."/>
            <person name="Iida T."/>
        </authorList>
    </citation>
    <scope>NUCLEOTIDE SEQUENCE [LARGE SCALE GENOMIC DNA]</scope>
    <source>
        <strain>RIMD 2210633</strain>
    </source>
</reference>
<accession>Q87SX6</accession>
<feature type="chain" id="PRO_0000105924" description="Adenylyl-sulfate kinase">
    <location>
        <begin position="1"/>
        <end position="205"/>
    </location>
</feature>
<feature type="active site" description="Phosphoserine intermediate" evidence="1">
    <location>
        <position position="113"/>
    </location>
</feature>
<feature type="binding site" evidence="1">
    <location>
        <begin position="39"/>
        <end position="46"/>
    </location>
    <ligand>
        <name>ATP</name>
        <dbReference type="ChEBI" id="CHEBI:30616"/>
    </ligand>
</feature>
<gene>
    <name evidence="1" type="primary">cysC</name>
    <name type="ordered locus">VP0296</name>
</gene>
<organism>
    <name type="scientific">Vibrio parahaemolyticus serotype O3:K6 (strain RIMD 2210633)</name>
    <dbReference type="NCBI Taxonomy" id="223926"/>
    <lineage>
        <taxon>Bacteria</taxon>
        <taxon>Pseudomonadati</taxon>
        <taxon>Pseudomonadota</taxon>
        <taxon>Gammaproteobacteria</taxon>
        <taxon>Vibrionales</taxon>
        <taxon>Vibrionaceae</taxon>
        <taxon>Vibrio</taxon>
    </lineage>
</organism>